<reference key="1">
    <citation type="journal article" date="2008" name="Proc. Natl. Acad. Sci. U.S.A.">
        <title>The genome of Clostridium kluyveri, a strict anaerobe with unique metabolic features.</title>
        <authorList>
            <person name="Seedorf H."/>
            <person name="Fricke W.F."/>
            <person name="Veith B."/>
            <person name="Brueggemann H."/>
            <person name="Liesegang H."/>
            <person name="Strittmatter A."/>
            <person name="Miethke M."/>
            <person name="Buckel W."/>
            <person name="Hinderberger J."/>
            <person name="Li F."/>
            <person name="Hagemeier C."/>
            <person name="Thauer R.K."/>
            <person name="Gottschalk G."/>
        </authorList>
    </citation>
    <scope>NUCLEOTIDE SEQUENCE [LARGE SCALE GENOMIC DNA]</scope>
    <source>
        <strain>ATCC 8527 / DSM 555 / NBRC 12016 / NCIMB 10680 / K1</strain>
    </source>
</reference>
<organism>
    <name type="scientific">Clostridium kluyveri (strain ATCC 8527 / DSM 555 / NBRC 12016 / NCIMB 10680 / K1)</name>
    <dbReference type="NCBI Taxonomy" id="431943"/>
    <lineage>
        <taxon>Bacteria</taxon>
        <taxon>Bacillati</taxon>
        <taxon>Bacillota</taxon>
        <taxon>Clostridia</taxon>
        <taxon>Eubacteriales</taxon>
        <taxon>Clostridiaceae</taxon>
        <taxon>Clostridium</taxon>
    </lineage>
</organism>
<evidence type="ECO:0000255" key="1">
    <source>
        <dbReference type="HAMAP-Rule" id="MF_00252"/>
    </source>
</evidence>
<gene>
    <name evidence="1" type="primary">lysS</name>
    <name type="ordered locus">CKL_0178</name>
</gene>
<keyword id="KW-0030">Aminoacyl-tRNA synthetase</keyword>
<keyword id="KW-0067">ATP-binding</keyword>
<keyword id="KW-0963">Cytoplasm</keyword>
<keyword id="KW-0436">Ligase</keyword>
<keyword id="KW-0460">Magnesium</keyword>
<keyword id="KW-0479">Metal-binding</keyword>
<keyword id="KW-0547">Nucleotide-binding</keyword>
<keyword id="KW-0648">Protein biosynthesis</keyword>
<keyword id="KW-1185">Reference proteome</keyword>
<sequence length="502" mass="58478">MAKEEKNLHVLEENFNQLIRERIQKFKNLQEQNKDPFEVYKVERTHTSKEIKDNYETLDGTDVTVAGRLMSKRVHGKAGFSDLYDRYGKIQLYIKINDVGEEKLKEYKSYDIGDILSVSGKVFKTRTGEVSIHITDFQLAAKSLKPLPEKWHGLKDPDLRYRQRYVDLIINQDVRDTFLKRTAVIRAIREFLDGRDYIEVETPILSSIAGGAAAKPFITHHNALDIDMYLRIATELYLKRLIVGGFEKVYEIGKNFRNEGIDVRHNPEFTAMELYEAFSDYNDMMELTENMLAYVCEKVLGTTKVIYQDTEIDFKPPWNRITMVDAVKQFTKVDFNEVESDDEARKIAVEKNIELKKELKDCTKGDILVGMFEEFCEHKFIQPTFVMDYPVEISPLTKKKRGNDKYTERFEGFIFGREVCNAYSELNDPIVQRERFMQQIRERELGDDEAYMMDEDFINALEIGMPPTGGLGIGLDRIIMFLTNSYSIRDVILFPTMKPSQQ</sequence>
<accession>A5N4L1</accession>
<dbReference type="EC" id="6.1.1.6" evidence="1"/>
<dbReference type="EMBL" id="CP000673">
    <property type="protein sequence ID" value="EDK32242.1"/>
    <property type="molecule type" value="Genomic_DNA"/>
</dbReference>
<dbReference type="RefSeq" id="WP_011988768.1">
    <property type="nucleotide sequence ID" value="NC_009706.1"/>
</dbReference>
<dbReference type="SMR" id="A5N4L1"/>
<dbReference type="STRING" id="431943.CKL_0178"/>
<dbReference type="KEGG" id="ckl:CKL_0178"/>
<dbReference type="eggNOG" id="COG1190">
    <property type="taxonomic scope" value="Bacteria"/>
</dbReference>
<dbReference type="HOGENOM" id="CLU_008255_6_0_9"/>
<dbReference type="Proteomes" id="UP000002411">
    <property type="component" value="Chromosome"/>
</dbReference>
<dbReference type="GO" id="GO:0005829">
    <property type="term" value="C:cytosol"/>
    <property type="evidence" value="ECO:0007669"/>
    <property type="project" value="TreeGrafter"/>
</dbReference>
<dbReference type="GO" id="GO:0005524">
    <property type="term" value="F:ATP binding"/>
    <property type="evidence" value="ECO:0007669"/>
    <property type="project" value="UniProtKB-UniRule"/>
</dbReference>
<dbReference type="GO" id="GO:0140096">
    <property type="term" value="F:catalytic activity, acting on a protein"/>
    <property type="evidence" value="ECO:0007669"/>
    <property type="project" value="UniProtKB-ARBA"/>
</dbReference>
<dbReference type="GO" id="GO:0004824">
    <property type="term" value="F:lysine-tRNA ligase activity"/>
    <property type="evidence" value="ECO:0007669"/>
    <property type="project" value="UniProtKB-UniRule"/>
</dbReference>
<dbReference type="GO" id="GO:0000287">
    <property type="term" value="F:magnesium ion binding"/>
    <property type="evidence" value="ECO:0007669"/>
    <property type="project" value="UniProtKB-UniRule"/>
</dbReference>
<dbReference type="GO" id="GO:0016740">
    <property type="term" value="F:transferase activity"/>
    <property type="evidence" value="ECO:0007669"/>
    <property type="project" value="UniProtKB-ARBA"/>
</dbReference>
<dbReference type="GO" id="GO:0000049">
    <property type="term" value="F:tRNA binding"/>
    <property type="evidence" value="ECO:0007669"/>
    <property type="project" value="TreeGrafter"/>
</dbReference>
<dbReference type="GO" id="GO:0006430">
    <property type="term" value="P:lysyl-tRNA aminoacylation"/>
    <property type="evidence" value="ECO:0007669"/>
    <property type="project" value="UniProtKB-UniRule"/>
</dbReference>
<dbReference type="CDD" id="cd00775">
    <property type="entry name" value="LysRS_core"/>
    <property type="match status" value="1"/>
</dbReference>
<dbReference type="CDD" id="cd04322">
    <property type="entry name" value="LysRS_N"/>
    <property type="match status" value="1"/>
</dbReference>
<dbReference type="FunFam" id="2.40.50.140:FF:000024">
    <property type="entry name" value="Lysine--tRNA ligase"/>
    <property type="match status" value="1"/>
</dbReference>
<dbReference type="FunFam" id="3.30.930.10:FF:000001">
    <property type="entry name" value="Lysine--tRNA ligase"/>
    <property type="match status" value="1"/>
</dbReference>
<dbReference type="Gene3D" id="3.30.930.10">
    <property type="entry name" value="Bira Bifunctional Protein, Domain 2"/>
    <property type="match status" value="1"/>
</dbReference>
<dbReference type="Gene3D" id="2.40.50.140">
    <property type="entry name" value="Nucleic acid-binding proteins"/>
    <property type="match status" value="1"/>
</dbReference>
<dbReference type="HAMAP" id="MF_00252">
    <property type="entry name" value="Lys_tRNA_synth_class2"/>
    <property type="match status" value="1"/>
</dbReference>
<dbReference type="InterPro" id="IPR004364">
    <property type="entry name" value="Aa-tRNA-synt_II"/>
</dbReference>
<dbReference type="InterPro" id="IPR006195">
    <property type="entry name" value="aa-tRNA-synth_II"/>
</dbReference>
<dbReference type="InterPro" id="IPR045864">
    <property type="entry name" value="aa-tRNA-synth_II/BPL/LPL"/>
</dbReference>
<dbReference type="InterPro" id="IPR002313">
    <property type="entry name" value="Lys-tRNA-ligase_II"/>
</dbReference>
<dbReference type="InterPro" id="IPR034762">
    <property type="entry name" value="Lys-tRNA-ligase_II_bac/euk"/>
</dbReference>
<dbReference type="InterPro" id="IPR044136">
    <property type="entry name" value="Lys-tRNA-ligase_II_N"/>
</dbReference>
<dbReference type="InterPro" id="IPR018149">
    <property type="entry name" value="Lys-tRNA-synth_II_C"/>
</dbReference>
<dbReference type="InterPro" id="IPR012340">
    <property type="entry name" value="NA-bd_OB-fold"/>
</dbReference>
<dbReference type="InterPro" id="IPR004365">
    <property type="entry name" value="NA-bd_OB_tRNA"/>
</dbReference>
<dbReference type="NCBIfam" id="TIGR00499">
    <property type="entry name" value="lysS_bact"/>
    <property type="match status" value="1"/>
</dbReference>
<dbReference type="NCBIfam" id="NF001756">
    <property type="entry name" value="PRK00484.1"/>
    <property type="match status" value="1"/>
</dbReference>
<dbReference type="PANTHER" id="PTHR42918:SF15">
    <property type="entry name" value="LYSINE--TRNA LIGASE, CHLOROPLASTIC_MITOCHONDRIAL"/>
    <property type="match status" value="1"/>
</dbReference>
<dbReference type="PANTHER" id="PTHR42918">
    <property type="entry name" value="LYSYL-TRNA SYNTHETASE"/>
    <property type="match status" value="1"/>
</dbReference>
<dbReference type="Pfam" id="PF00152">
    <property type="entry name" value="tRNA-synt_2"/>
    <property type="match status" value="1"/>
</dbReference>
<dbReference type="Pfam" id="PF01336">
    <property type="entry name" value="tRNA_anti-codon"/>
    <property type="match status" value="1"/>
</dbReference>
<dbReference type="PIRSF" id="PIRSF039101">
    <property type="entry name" value="LysRS2"/>
    <property type="match status" value="1"/>
</dbReference>
<dbReference type="PRINTS" id="PR00982">
    <property type="entry name" value="TRNASYNTHLYS"/>
</dbReference>
<dbReference type="SUPFAM" id="SSF55681">
    <property type="entry name" value="Class II aaRS and biotin synthetases"/>
    <property type="match status" value="1"/>
</dbReference>
<dbReference type="SUPFAM" id="SSF50249">
    <property type="entry name" value="Nucleic acid-binding proteins"/>
    <property type="match status" value="1"/>
</dbReference>
<dbReference type="PROSITE" id="PS50862">
    <property type="entry name" value="AA_TRNA_LIGASE_II"/>
    <property type="match status" value="1"/>
</dbReference>
<name>SYK_CLOK5</name>
<protein>
    <recommendedName>
        <fullName evidence="1">Lysine--tRNA ligase</fullName>
        <ecNumber evidence="1">6.1.1.6</ecNumber>
    </recommendedName>
    <alternativeName>
        <fullName evidence="1">Lysyl-tRNA synthetase</fullName>
        <shortName evidence="1">LysRS</shortName>
    </alternativeName>
</protein>
<proteinExistence type="inferred from homology"/>
<comment type="catalytic activity">
    <reaction evidence="1">
        <text>tRNA(Lys) + L-lysine + ATP = L-lysyl-tRNA(Lys) + AMP + diphosphate</text>
        <dbReference type="Rhea" id="RHEA:20792"/>
        <dbReference type="Rhea" id="RHEA-COMP:9696"/>
        <dbReference type="Rhea" id="RHEA-COMP:9697"/>
        <dbReference type="ChEBI" id="CHEBI:30616"/>
        <dbReference type="ChEBI" id="CHEBI:32551"/>
        <dbReference type="ChEBI" id="CHEBI:33019"/>
        <dbReference type="ChEBI" id="CHEBI:78442"/>
        <dbReference type="ChEBI" id="CHEBI:78529"/>
        <dbReference type="ChEBI" id="CHEBI:456215"/>
        <dbReference type="EC" id="6.1.1.6"/>
    </reaction>
</comment>
<comment type="cofactor">
    <cofactor evidence="1">
        <name>Mg(2+)</name>
        <dbReference type="ChEBI" id="CHEBI:18420"/>
    </cofactor>
    <text evidence="1">Binds 3 Mg(2+) ions per subunit.</text>
</comment>
<comment type="subunit">
    <text evidence="1">Homodimer.</text>
</comment>
<comment type="subcellular location">
    <subcellularLocation>
        <location evidence="1">Cytoplasm</location>
    </subcellularLocation>
</comment>
<comment type="similarity">
    <text evidence="1">Belongs to the class-II aminoacyl-tRNA synthetase family.</text>
</comment>
<feature type="chain" id="PRO_1000078497" description="Lysine--tRNA ligase">
    <location>
        <begin position="1"/>
        <end position="502"/>
    </location>
</feature>
<feature type="binding site" evidence="1">
    <location>
        <position position="411"/>
    </location>
    <ligand>
        <name>Mg(2+)</name>
        <dbReference type="ChEBI" id="CHEBI:18420"/>
        <label>1</label>
    </ligand>
</feature>
<feature type="binding site" evidence="1">
    <location>
        <position position="418"/>
    </location>
    <ligand>
        <name>Mg(2+)</name>
        <dbReference type="ChEBI" id="CHEBI:18420"/>
        <label>1</label>
    </ligand>
</feature>
<feature type="binding site" evidence="1">
    <location>
        <position position="418"/>
    </location>
    <ligand>
        <name>Mg(2+)</name>
        <dbReference type="ChEBI" id="CHEBI:18420"/>
        <label>2</label>
    </ligand>
</feature>